<reference key="1">
    <citation type="submission" date="2007-03" db="EMBL/GenBank/DDBJ databases">
        <title>Complete sequence of Prosthecochloris vibrioformis DSM 265.</title>
        <authorList>
            <consortium name="US DOE Joint Genome Institute"/>
            <person name="Copeland A."/>
            <person name="Lucas S."/>
            <person name="Lapidus A."/>
            <person name="Barry K."/>
            <person name="Detter J.C."/>
            <person name="Glavina del Rio T."/>
            <person name="Hammon N."/>
            <person name="Israni S."/>
            <person name="Pitluck S."/>
            <person name="Schmutz J."/>
            <person name="Larimer F."/>
            <person name="Land M."/>
            <person name="Hauser L."/>
            <person name="Mikhailova N."/>
            <person name="Li T."/>
            <person name="Overmann J."/>
            <person name="Schuster S.C."/>
            <person name="Bryant D.A."/>
            <person name="Richardson P."/>
        </authorList>
    </citation>
    <scope>NUCLEOTIDE SEQUENCE [LARGE SCALE GENOMIC DNA]</scope>
    <source>
        <strain>DSM 265 / 1930</strain>
    </source>
</reference>
<dbReference type="EMBL" id="CP000607">
    <property type="protein sequence ID" value="ABP36278.1"/>
    <property type="molecule type" value="Genomic_DNA"/>
</dbReference>
<dbReference type="SMR" id="A4SCR9"/>
<dbReference type="STRING" id="290318.Cvib_0256"/>
<dbReference type="KEGG" id="pvi:Cvib_0256"/>
<dbReference type="eggNOG" id="COG0093">
    <property type="taxonomic scope" value="Bacteria"/>
</dbReference>
<dbReference type="HOGENOM" id="CLU_095071_2_1_10"/>
<dbReference type="OrthoDB" id="9806379at2"/>
<dbReference type="GO" id="GO:0022625">
    <property type="term" value="C:cytosolic large ribosomal subunit"/>
    <property type="evidence" value="ECO:0007669"/>
    <property type="project" value="TreeGrafter"/>
</dbReference>
<dbReference type="GO" id="GO:0070180">
    <property type="term" value="F:large ribosomal subunit rRNA binding"/>
    <property type="evidence" value="ECO:0007669"/>
    <property type="project" value="TreeGrafter"/>
</dbReference>
<dbReference type="GO" id="GO:0003735">
    <property type="term" value="F:structural constituent of ribosome"/>
    <property type="evidence" value="ECO:0007669"/>
    <property type="project" value="InterPro"/>
</dbReference>
<dbReference type="GO" id="GO:0006412">
    <property type="term" value="P:translation"/>
    <property type="evidence" value="ECO:0007669"/>
    <property type="project" value="UniProtKB-UniRule"/>
</dbReference>
<dbReference type="CDD" id="cd00337">
    <property type="entry name" value="Ribosomal_uL14"/>
    <property type="match status" value="1"/>
</dbReference>
<dbReference type="FunFam" id="2.40.150.20:FF:000001">
    <property type="entry name" value="50S ribosomal protein L14"/>
    <property type="match status" value="1"/>
</dbReference>
<dbReference type="Gene3D" id="2.40.150.20">
    <property type="entry name" value="Ribosomal protein L14"/>
    <property type="match status" value="1"/>
</dbReference>
<dbReference type="HAMAP" id="MF_01367">
    <property type="entry name" value="Ribosomal_uL14"/>
    <property type="match status" value="1"/>
</dbReference>
<dbReference type="InterPro" id="IPR000218">
    <property type="entry name" value="Ribosomal_uL14"/>
</dbReference>
<dbReference type="InterPro" id="IPR005745">
    <property type="entry name" value="Ribosomal_uL14_bac-type"/>
</dbReference>
<dbReference type="InterPro" id="IPR019972">
    <property type="entry name" value="Ribosomal_uL14_CS"/>
</dbReference>
<dbReference type="InterPro" id="IPR036853">
    <property type="entry name" value="Ribosomal_uL14_sf"/>
</dbReference>
<dbReference type="NCBIfam" id="TIGR01067">
    <property type="entry name" value="rplN_bact"/>
    <property type="match status" value="1"/>
</dbReference>
<dbReference type="PANTHER" id="PTHR11761">
    <property type="entry name" value="50S/60S RIBOSOMAL PROTEIN L14/L23"/>
    <property type="match status" value="1"/>
</dbReference>
<dbReference type="PANTHER" id="PTHR11761:SF3">
    <property type="entry name" value="LARGE RIBOSOMAL SUBUNIT PROTEIN UL14M"/>
    <property type="match status" value="1"/>
</dbReference>
<dbReference type="Pfam" id="PF00238">
    <property type="entry name" value="Ribosomal_L14"/>
    <property type="match status" value="1"/>
</dbReference>
<dbReference type="SMART" id="SM01374">
    <property type="entry name" value="Ribosomal_L14"/>
    <property type="match status" value="1"/>
</dbReference>
<dbReference type="SUPFAM" id="SSF50193">
    <property type="entry name" value="Ribosomal protein L14"/>
    <property type="match status" value="1"/>
</dbReference>
<dbReference type="PROSITE" id="PS00049">
    <property type="entry name" value="RIBOSOMAL_L14"/>
    <property type="match status" value="1"/>
</dbReference>
<comment type="function">
    <text evidence="1">Binds to 23S rRNA. Forms part of two intersubunit bridges in the 70S ribosome.</text>
</comment>
<comment type="subunit">
    <text evidence="1">Part of the 50S ribosomal subunit. Forms a cluster with proteins L3 and L19. In the 70S ribosome, L14 and L19 interact and together make contacts with the 16S rRNA in bridges B5 and B8.</text>
</comment>
<comment type="similarity">
    <text evidence="1">Belongs to the universal ribosomal protein uL14 family.</text>
</comment>
<sequence length="122" mass="13395">MIQKETNLVVADNSGAKKVRCIHVFGGTGRRYASLGDQVIVSVKAAVPGGVVKKKEVCKAVVVRCAKELRRKDGSYIRFDENAVVLLNAQGEPRGTRIFGPVARELRDRKYMKIVSLAPEVL</sequence>
<name>RL14_CHLPM</name>
<organism>
    <name type="scientific">Chlorobium phaeovibrioides (strain DSM 265 / 1930)</name>
    <name type="common">Prosthecochloris vibrioformis (strain DSM 265)</name>
    <dbReference type="NCBI Taxonomy" id="290318"/>
    <lineage>
        <taxon>Bacteria</taxon>
        <taxon>Pseudomonadati</taxon>
        <taxon>Chlorobiota</taxon>
        <taxon>Chlorobiia</taxon>
        <taxon>Chlorobiales</taxon>
        <taxon>Chlorobiaceae</taxon>
        <taxon>Chlorobium/Pelodictyon group</taxon>
        <taxon>Chlorobium</taxon>
    </lineage>
</organism>
<proteinExistence type="inferred from homology"/>
<evidence type="ECO:0000255" key="1">
    <source>
        <dbReference type="HAMAP-Rule" id="MF_01367"/>
    </source>
</evidence>
<evidence type="ECO:0000305" key="2"/>
<gene>
    <name evidence="1" type="primary">rplN</name>
    <name type="ordered locus">Cvib_0256</name>
</gene>
<keyword id="KW-0687">Ribonucleoprotein</keyword>
<keyword id="KW-0689">Ribosomal protein</keyword>
<keyword id="KW-0694">RNA-binding</keyword>
<keyword id="KW-0699">rRNA-binding</keyword>
<accession>A4SCR9</accession>
<protein>
    <recommendedName>
        <fullName evidence="1">Large ribosomal subunit protein uL14</fullName>
    </recommendedName>
    <alternativeName>
        <fullName evidence="2">50S ribosomal protein L14</fullName>
    </alternativeName>
</protein>
<feature type="chain" id="PRO_1000087139" description="Large ribosomal subunit protein uL14">
    <location>
        <begin position="1"/>
        <end position="122"/>
    </location>
</feature>